<dbReference type="EC" id="1.14.-.-" evidence="1"/>
<dbReference type="EMBL" id="CP000387">
    <property type="protein sequence ID" value="ABN44036.1"/>
    <property type="molecule type" value="Genomic_DNA"/>
</dbReference>
<dbReference type="RefSeq" id="WP_011836611.1">
    <property type="nucleotide sequence ID" value="NC_009009.1"/>
</dbReference>
<dbReference type="RefSeq" id="YP_001034586.1">
    <property type="nucleotide sequence ID" value="NC_009009.1"/>
</dbReference>
<dbReference type="SMR" id="A3CLI1"/>
<dbReference type="STRING" id="388919.SSA_0593"/>
<dbReference type="KEGG" id="ssa:SSA_0593"/>
<dbReference type="PATRIC" id="fig|388919.9.peg.573"/>
<dbReference type="eggNOG" id="COG1054">
    <property type="taxonomic scope" value="Bacteria"/>
</dbReference>
<dbReference type="HOGENOM" id="CLU_038878_1_0_9"/>
<dbReference type="OrthoDB" id="9778326at2"/>
<dbReference type="Proteomes" id="UP000002148">
    <property type="component" value="Chromosome"/>
</dbReference>
<dbReference type="GO" id="GO:0016705">
    <property type="term" value="F:oxidoreductase activity, acting on paired donors, with incorporation or reduction of molecular oxygen"/>
    <property type="evidence" value="ECO:0007669"/>
    <property type="project" value="UniProtKB-UniRule"/>
</dbReference>
<dbReference type="GO" id="GO:0006400">
    <property type="term" value="P:tRNA modification"/>
    <property type="evidence" value="ECO:0007669"/>
    <property type="project" value="UniProtKB-UniRule"/>
</dbReference>
<dbReference type="CDD" id="cd01518">
    <property type="entry name" value="RHOD_YceA"/>
    <property type="match status" value="1"/>
</dbReference>
<dbReference type="Gene3D" id="3.30.70.100">
    <property type="match status" value="1"/>
</dbReference>
<dbReference type="Gene3D" id="3.40.250.10">
    <property type="entry name" value="Rhodanese-like domain"/>
    <property type="match status" value="1"/>
</dbReference>
<dbReference type="HAMAP" id="MF_00469">
    <property type="entry name" value="TrhO"/>
    <property type="match status" value="1"/>
</dbReference>
<dbReference type="InterPro" id="IPR001763">
    <property type="entry name" value="Rhodanese-like_dom"/>
</dbReference>
<dbReference type="InterPro" id="IPR036873">
    <property type="entry name" value="Rhodanese-like_dom_sf"/>
</dbReference>
<dbReference type="InterPro" id="IPR022111">
    <property type="entry name" value="Rhodanese_C"/>
</dbReference>
<dbReference type="InterPro" id="IPR020936">
    <property type="entry name" value="TrhO"/>
</dbReference>
<dbReference type="InterPro" id="IPR040503">
    <property type="entry name" value="TRHO_N"/>
</dbReference>
<dbReference type="NCBIfam" id="NF001135">
    <property type="entry name" value="PRK00142.1-3"/>
    <property type="match status" value="1"/>
</dbReference>
<dbReference type="NCBIfam" id="NF001137">
    <property type="entry name" value="PRK00142.1-5"/>
    <property type="match status" value="1"/>
</dbReference>
<dbReference type="PANTHER" id="PTHR43268:SF3">
    <property type="entry name" value="RHODANESE-LIKE DOMAIN-CONTAINING PROTEIN 7-RELATED"/>
    <property type="match status" value="1"/>
</dbReference>
<dbReference type="PANTHER" id="PTHR43268">
    <property type="entry name" value="THIOSULFATE SULFURTRANSFERASE/RHODANESE-LIKE DOMAIN-CONTAINING PROTEIN 2"/>
    <property type="match status" value="1"/>
</dbReference>
<dbReference type="Pfam" id="PF00581">
    <property type="entry name" value="Rhodanese"/>
    <property type="match status" value="1"/>
</dbReference>
<dbReference type="Pfam" id="PF12368">
    <property type="entry name" value="Rhodanese_C"/>
    <property type="match status" value="1"/>
</dbReference>
<dbReference type="Pfam" id="PF17773">
    <property type="entry name" value="UPF0176_N"/>
    <property type="match status" value="1"/>
</dbReference>
<dbReference type="SMART" id="SM00450">
    <property type="entry name" value="RHOD"/>
    <property type="match status" value="1"/>
</dbReference>
<dbReference type="SUPFAM" id="SSF52821">
    <property type="entry name" value="Rhodanese/Cell cycle control phosphatase"/>
    <property type="match status" value="1"/>
</dbReference>
<dbReference type="PROSITE" id="PS50206">
    <property type="entry name" value="RHODANESE_3"/>
    <property type="match status" value="1"/>
</dbReference>
<protein>
    <recommendedName>
        <fullName evidence="1">tRNA uridine(34) hydroxylase</fullName>
        <ecNumber evidence="1">1.14.-.-</ecNumber>
    </recommendedName>
    <alternativeName>
        <fullName evidence="1">tRNA hydroxylation protein O</fullName>
    </alternativeName>
</protein>
<feature type="chain" id="PRO_1000013790" description="tRNA uridine(34) hydroxylase">
    <location>
        <begin position="1"/>
        <end position="328"/>
    </location>
</feature>
<feature type="domain" description="Rhodanese" evidence="1">
    <location>
        <begin position="130"/>
        <end position="224"/>
    </location>
</feature>
<feature type="active site" description="Cysteine persulfide intermediate" evidence="1">
    <location>
        <position position="184"/>
    </location>
</feature>
<name>TRHO_STRSV</name>
<comment type="function">
    <text evidence="1">Catalyzes oxygen-dependent 5-hydroxyuridine (ho5U) modification at position 34 in tRNAs.</text>
</comment>
<comment type="catalytic activity">
    <reaction evidence="1">
        <text>uridine(34) in tRNA + AH2 + O2 = 5-hydroxyuridine(34) in tRNA + A + H2O</text>
        <dbReference type="Rhea" id="RHEA:64224"/>
        <dbReference type="Rhea" id="RHEA-COMP:11727"/>
        <dbReference type="Rhea" id="RHEA-COMP:13381"/>
        <dbReference type="ChEBI" id="CHEBI:13193"/>
        <dbReference type="ChEBI" id="CHEBI:15377"/>
        <dbReference type="ChEBI" id="CHEBI:15379"/>
        <dbReference type="ChEBI" id="CHEBI:17499"/>
        <dbReference type="ChEBI" id="CHEBI:65315"/>
        <dbReference type="ChEBI" id="CHEBI:136877"/>
    </reaction>
</comment>
<comment type="similarity">
    <text evidence="1">Belongs to the TrhO family.</text>
</comment>
<gene>
    <name evidence="1" type="primary">trhO</name>
    <name type="ordered locus">SSA_0593</name>
</gene>
<sequence>MAKDIRVLLYYKYVPIENAEKFAADHLAFCKSIGLKGRILVADEGINGTVSGDYETTQKYMDYVHSLPGMEDLWFKIDEENEQAFKKMFVRYKKEIVHLGLEDNDFDNDINPLETTGAYLSPKEFKEALLDEDTVVLDTRNDYEYDLGHFRGAIRPDIRNFRELPQWVRDNKEKFMDKRVIVYCTGGVRCEKFSGWMVREGYKDVGQLHGGIATYGKDPEVQGELWDGKMYVFDERISVDINHVNPVVIGKDWFDGTPCERYVNCGNPECNRRILTSEENEDKYLRGCSHECRVHPRNRYVAENGLSQAEVVERLAAIGESLETLVAQ</sequence>
<proteinExistence type="inferred from homology"/>
<keyword id="KW-0560">Oxidoreductase</keyword>
<keyword id="KW-1185">Reference proteome</keyword>
<keyword id="KW-0819">tRNA processing</keyword>
<organism>
    <name type="scientific">Streptococcus sanguinis (strain SK36)</name>
    <dbReference type="NCBI Taxonomy" id="388919"/>
    <lineage>
        <taxon>Bacteria</taxon>
        <taxon>Bacillati</taxon>
        <taxon>Bacillota</taxon>
        <taxon>Bacilli</taxon>
        <taxon>Lactobacillales</taxon>
        <taxon>Streptococcaceae</taxon>
        <taxon>Streptococcus</taxon>
    </lineage>
</organism>
<reference key="1">
    <citation type="journal article" date="2007" name="J. Bacteriol.">
        <title>Genome of the opportunistic pathogen Streptococcus sanguinis.</title>
        <authorList>
            <person name="Xu P."/>
            <person name="Alves J.M."/>
            <person name="Kitten T."/>
            <person name="Brown A."/>
            <person name="Chen Z."/>
            <person name="Ozaki L.S."/>
            <person name="Manque P."/>
            <person name="Ge X."/>
            <person name="Serrano M.G."/>
            <person name="Puiu D."/>
            <person name="Hendricks S."/>
            <person name="Wang Y."/>
            <person name="Chaplin M.D."/>
            <person name="Akan D."/>
            <person name="Paik S."/>
            <person name="Peterson D.L."/>
            <person name="Macrina F.L."/>
            <person name="Buck G.A."/>
        </authorList>
    </citation>
    <scope>NUCLEOTIDE SEQUENCE [LARGE SCALE GENOMIC DNA]</scope>
    <source>
        <strain>SK36</strain>
    </source>
</reference>
<accession>A3CLI1</accession>
<evidence type="ECO:0000255" key="1">
    <source>
        <dbReference type="HAMAP-Rule" id="MF_00469"/>
    </source>
</evidence>